<protein>
    <recommendedName>
        <fullName evidence="1">Regulator of sigma D</fullName>
    </recommendedName>
</protein>
<keyword id="KW-0963">Cytoplasm</keyword>
<keyword id="KW-1185">Reference proteome</keyword>
<keyword id="KW-0804">Transcription</keyword>
<keyword id="KW-0805">Transcription regulation</keyword>
<name>RSD_ECO27</name>
<dbReference type="EMBL" id="FM180568">
    <property type="protein sequence ID" value="CAS11850.1"/>
    <property type="molecule type" value="Genomic_DNA"/>
</dbReference>
<dbReference type="RefSeq" id="WP_000934310.1">
    <property type="nucleotide sequence ID" value="NC_011601.1"/>
</dbReference>
<dbReference type="SMR" id="B7UPF0"/>
<dbReference type="KEGG" id="ecg:E2348C_4302"/>
<dbReference type="HOGENOM" id="CLU_142729_0_0_6"/>
<dbReference type="Proteomes" id="UP000008205">
    <property type="component" value="Chromosome"/>
</dbReference>
<dbReference type="GO" id="GO:0005737">
    <property type="term" value="C:cytoplasm"/>
    <property type="evidence" value="ECO:0007669"/>
    <property type="project" value="UniProtKB-SubCell"/>
</dbReference>
<dbReference type="GO" id="GO:0006355">
    <property type="term" value="P:regulation of DNA-templated transcription"/>
    <property type="evidence" value="ECO:0007669"/>
    <property type="project" value="InterPro"/>
</dbReference>
<dbReference type="FunFam" id="1.20.120.1370:FF:000001">
    <property type="entry name" value="Regulator of sigma D"/>
    <property type="match status" value="1"/>
</dbReference>
<dbReference type="Gene3D" id="1.20.120.1370">
    <property type="entry name" value="Regulator of RNA polymerase sigma(70) subunit, domain 4"/>
    <property type="match status" value="1"/>
</dbReference>
<dbReference type="HAMAP" id="MF_01181">
    <property type="entry name" value="Rsd"/>
    <property type="match status" value="1"/>
</dbReference>
<dbReference type="InterPro" id="IPR038309">
    <property type="entry name" value="Rsd/AlgQ_sf"/>
</dbReference>
<dbReference type="InterPro" id="IPR023785">
    <property type="entry name" value="Sigma70_reg_Rsd"/>
</dbReference>
<dbReference type="InterPro" id="IPR007448">
    <property type="entry name" value="Sigma70_reg_Rsd_AlgQ"/>
</dbReference>
<dbReference type="NCBIfam" id="NF008723">
    <property type="entry name" value="PRK11718.1"/>
    <property type="match status" value="1"/>
</dbReference>
<dbReference type="Pfam" id="PF04353">
    <property type="entry name" value="Rsd_AlgQ"/>
    <property type="match status" value="1"/>
</dbReference>
<dbReference type="PIRSF" id="PIRSF016548">
    <property type="entry name" value="Rsd_AlgQ"/>
    <property type="match status" value="1"/>
</dbReference>
<accession>B7UPF0</accession>
<proteinExistence type="inferred from homology"/>
<organism>
    <name type="scientific">Escherichia coli O127:H6 (strain E2348/69 / EPEC)</name>
    <dbReference type="NCBI Taxonomy" id="574521"/>
    <lineage>
        <taxon>Bacteria</taxon>
        <taxon>Pseudomonadati</taxon>
        <taxon>Pseudomonadota</taxon>
        <taxon>Gammaproteobacteria</taxon>
        <taxon>Enterobacterales</taxon>
        <taxon>Enterobacteriaceae</taxon>
        <taxon>Escherichia</taxon>
    </lineage>
</organism>
<reference key="1">
    <citation type="journal article" date="2009" name="J. Bacteriol.">
        <title>Complete genome sequence and comparative genome analysis of enteropathogenic Escherichia coli O127:H6 strain E2348/69.</title>
        <authorList>
            <person name="Iguchi A."/>
            <person name="Thomson N.R."/>
            <person name="Ogura Y."/>
            <person name="Saunders D."/>
            <person name="Ooka T."/>
            <person name="Henderson I.R."/>
            <person name="Harris D."/>
            <person name="Asadulghani M."/>
            <person name="Kurokawa K."/>
            <person name="Dean P."/>
            <person name="Kenny B."/>
            <person name="Quail M.A."/>
            <person name="Thurston S."/>
            <person name="Dougan G."/>
            <person name="Hayashi T."/>
            <person name="Parkhill J."/>
            <person name="Frankel G."/>
        </authorList>
    </citation>
    <scope>NUCLEOTIDE SEQUENCE [LARGE SCALE GENOMIC DNA]</scope>
    <source>
        <strain>E2348/69 / EPEC</strain>
    </source>
</reference>
<comment type="function">
    <text evidence="1">Binds RpoD and negatively regulates RpoD-mediated transcription activation by preventing the interaction between the primary sigma factor RpoD with the catalytic core of the RNA polymerase and with promoter DNA. May be involved in replacement of the RNA polymerase sigma subunit from RpoD to RpoS during the transition from exponential growth to the stationary phase.</text>
</comment>
<comment type="subunit">
    <text evidence="1">Interacts with RpoD.</text>
</comment>
<comment type="subcellular location">
    <subcellularLocation>
        <location evidence="1">Cytoplasm</location>
    </subcellularLocation>
</comment>
<comment type="similarity">
    <text evidence="1">Belongs to the Rsd/AlgQ family.</text>
</comment>
<feature type="chain" id="PRO_1000164435" description="Regulator of sigma D">
    <location>
        <begin position="1"/>
        <end position="158"/>
    </location>
</feature>
<sequence>MLNQLDNLTERVRGSNKLVYRWLHVRKHLLVAYYNLVGIKPGKESYMRLNEKALDDFCQSLVDYLSAGHFSIYERILHKLEGNGQLARAAKIWPQLEANTQQIMDDYDSSLETAIDHDNYLEFQQVLSDIGEALEARFVLEDKLILLVLDAARVKYPA</sequence>
<evidence type="ECO:0000255" key="1">
    <source>
        <dbReference type="HAMAP-Rule" id="MF_01181"/>
    </source>
</evidence>
<gene>
    <name evidence="1" type="primary">rsd</name>
    <name type="ordered locus">E2348C_4302</name>
</gene>